<dbReference type="EC" id="2.1.2.9" evidence="1"/>
<dbReference type="EMBL" id="AE015925">
    <property type="protein sequence ID" value="AAP04843.1"/>
    <property type="molecule type" value="Genomic_DNA"/>
</dbReference>
<dbReference type="SMR" id="Q824Q3"/>
<dbReference type="STRING" id="227941.CCA_00091"/>
<dbReference type="KEGG" id="cca:CCA_00091"/>
<dbReference type="eggNOG" id="COG0223">
    <property type="taxonomic scope" value="Bacteria"/>
</dbReference>
<dbReference type="HOGENOM" id="CLU_033347_1_1_0"/>
<dbReference type="Proteomes" id="UP000002193">
    <property type="component" value="Chromosome"/>
</dbReference>
<dbReference type="GO" id="GO:0005829">
    <property type="term" value="C:cytosol"/>
    <property type="evidence" value="ECO:0007669"/>
    <property type="project" value="TreeGrafter"/>
</dbReference>
<dbReference type="GO" id="GO:0004479">
    <property type="term" value="F:methionyl-tRNA formyltransferase activity"/>
    <property type="evidence" value="ECO:0007669"/>
    <property type="project" value="UniProtKB-UniRule"/>
</dbReference>
<dbReference type="CDD" id="cd08646">
    <property type="entry name" value="FMT_core_Met-tRNA-FMT_N"/>
    <property type="match status" value="1"/>
</dbReference>
<dbReference type="CDD" id="cd08704">
    <property type="entry name" value="Met_tRNA_FMT_C"/>
    <property type="match status" value="1"/>
</dbReference>
<dbReference type="Gene3D" id="3.40.50.12230">
    <property type="match status" value="1"/>
</dbReference>
<dbReference type="HAMAP" id="MF_00182">
    <property type="entry name" value="Formyl_trans"/>
    <property type="match status" value="1"/>
</dbReference>
<dbReference type="InterPro" id="IPR005794">
    <property type="entry name" value="Fmt"/>
</dbReference>
<dbReference type="InterPro" id="IPR005793">
    <property type="entry name" value="Formyl_trans_C"/>
</dbReference>
<dbReference type="InterPro" id="IPR002376">
    <property type="entry name" value="Formyl_transf_N"/>
</dbReference>
<dbReference type="InterPro" id="IPR036477">
    <property type="entry name" value="Formyl_transf_N_sf"/>
</dbReference>
<dbReference type="InterPro" id="IPR011034">
    <property type="entry name" value="Formyl_transferase-like_C_sf"/>
</dbReference>
<dbReference type="InterPro" id="IPR001555">
    <property type="entry name" value="GART_AS"/>
</dbReference>
<dbReference type="InterPro" id="IPR044135">
    <property type="entry name" value="Met-tRNA-FMT_C"/>
</dbReference>
<dbReference type="InterPro" id="IPR041711">
    <property type="entry name" value="Met-tRNA-FMT_N"/>
</dbReference>
<dbReference type="NCBIfam" id="TIGR00460">
    <property type="entry name" value="fmt"/>
    <property type="match status" value="1"/>
</dbReference>
<dbReference type="PANTHER" id="PTHR11138">
    <property type="entry name" value="METHIONYL-TRNA FORMYLTRANSFERASE"/>
    <property type="match status" value="1"/>
</dbReference>
<dbReference type="PANTHER" id="PTHR11138:SF5">
    <property type="entry name" value="METHIONYL-TRNA FORMYLTRANSFERASE, MITOCHONDRIAL"/>
    <property type="match status" value="1"/>
</dbReference>
<dbReference type="Pfam" id="PF02911">
    <property type="entry name" value="Formyl_trans_C"/>
    <property type="match status" value="1"/>
</dbReference>
<dbReference type="Pfam" id="PF00551">
    <property type="entry name" value="Formyl_trans_N"/>
    <property type="match status" value="1"/>
</dbReference>
<dbReference type="SUPFAM" id="SSF50486">
    <property type="entry name" value="FMT C-terminal domain-like"/>
    <property type="match status" value="1"/>
</dbReference>
<dbReference type="SUPFAM" id="SSF53328">
    <property type="entry name" value="Formyltransferase"/>
    <property type="match status" value="1"/>
</dbReference>
<dbReference type="PROSITE" id="PS00373">
    <property type="entry name" value="GART"/>
    <property type="match status" value="1"/>
</dbReference>
<keyword id="KW-0648">Protein biosynthesis</keyword>
<keyword id="KW-0808">Transferase</keyword>
<protein>
    <recommendedName>
        <fullName evidence="1">Methionyl-tRNA formyltransferase</fullName>
        <ecNumber evidence="1">2.1.2.9</ecNumber>
    </recommendedName>
</protein>
<reference key="1">
    <citation type="journal article" date="2003" name="Nucleic Acids Res.">
        <title>Genome sequence of Chlamydophila caviae (Chlamydia psittaci GPIC): examining the role of niche-specific genes in the evolution of the Chlamydiaceae.</title>
        <authorList>
            <person name="Read T.D."/>
            <person name="Myers G.S.A."/>
            <person name="Brunham R.C."/>
            <person name="Nelson W.C."/>
            <person name="Paulsen I.T."/>
            <person name="Heidelberg J.F."/>
            <person name="Holtzapple E.K."/>
            <person name="Khouri H.M."/>
            <person name="Federova N.B."/>
            <person name="Carty H.A."/>
            <person name="Umayam L.A."/>
            <person name="Haft D.H."/>
            <person name="Peterson J.D."/>
            <person name="Beanan M.J."/>
            <person name="White O."/>
            <person name="Salzberg S.L."/>
            <person name="Hsia R.-C."/>
            <person name="McClarty G."/>
            <person name="Rank R.G."/>
            <person name="Bavoil P.M."/>
            <person name="Fraser C.M."/>
        </authorList>
    </citation>
    <scope>NUCLEOTIDE SEQUENCE [LARGE SCALE GENOMIC DNA]</scope>
    <source>
        <strain>ATCC VR-813 / DSM 19441 / 03DC25 / GPIC</strain>
    </source>
</reference>
<name>FMT_CHLCV</name>
<accession>Q824Q3</accession>
<feature type="chain" id="PRO_0000082943" description="Methionyl-tRNA formyltransferase">
    <location>
        <begin position="1"/>
        <end position="321"/>
    </location>
</feature>
<feature type="binding site" evidence="1">
    <location>
        <begin position="112"/>
        <end position="115"/>
    </location>
    <ligand>
        <name>(6S)-5,6,7,8-tetrahydrofolate</name>
        <dbReference type="ChEBI" id="CHEBI:57453"/>
    </ligand>
</feature>
<gene>
    <name evidence="1" type="primary">fmt</name>
    <name type="ordered locus">CCA_00091</name>
</gene>
<proteinExistence type="inferred from homology"/>
<comment type="function">
    <text evidence="1">Attaches a formyl group to the free amino group of methionyl-tRNA(fMet). The formyl group appears to play a dual role in the initiator identity of N-formylmethionyl-tRNA by promoting its recognition by IF2 and preventing the misappropriation of this tRNA by the elongation apparatus.</text>
</comment>
<comment type="catalytic activity">
    <reaction evidence="1">
        <text>L-methionyl-tRNA(fMet) + (6R)-10-formyltetrahydrofolate = N-formyl-L-methionyl-tRNA(fMet) + (6S)-5,6,7,8-tetrahydrofolate + H(+)</text>
        <dbReference type="Rhea" id="RHEA:24380"/>
        <dbReference type="Rhea" id="RHEA-COMP:9952"/>
        <dbReference type="Rhea" id="RHEA-COMP:9953"/>
        <dbReference type="ChEBI" id="CHEBI:15378"/>
        <dbReference type="ChEBI" id="CHEBI:57453"/>
        <dbReference type="ChEBI" id="CHEBI:78530"/>
        <dbReference type="ChEBI" id="CHEBI:78844"/>
        <dbReference type="ChEBI" id="CHEBI:195366"/>
        <dbReference type="EC" id="2.1.2.9"/>
    </reaction>
</comment>
<comment type="similarity">
    <text evidence="1">Belongs to the Fmt family.</text>
</comment>
<evidence type="ECO:0000255" key="1">
    <source>
        <dbReference type="HAMAP-Rule" id="MF_00182"/>
    </source>
</evidence>
<sequence length="321" mass="34612">MLNLKVIYFGTPQFAATVLEDLLHHDVNVIGVVTRVDKPQKRSSQPIPSPVKTLALSKNIPLLQPEKASDPQFIEQLKAFEADVFIVVAYGAILRQVVLNIPKYGCYNLHAGLLPAYRGAAPIQRCIMDGVTQSGNTVIRMDAGMDTGDIAGVSYVPVGPDMTAGELAEALSAQGGEILIKTLQQISDGTISHTPQDSSKASIAPKLSKEEGFVLWNHPAEKVYAQIRGVTPAPGAWTLYSYQDKPAKRLVIRKASLASNKGIYGNPGDVIVSDQQELLIACAEGAICLKEIQPEGKGAMDSKTFLNGHSNHKLKLSFQNN</sequence>
<organism>
    <name type="scientific">Chlamydia caviae (strain ATCC VR-813 / DSM 19441 / 03DC25 / GPIC)</name>
    <name type="common">Chlamydophila caviae</name>
    <dbReference type="NCBI Taxonomy" id="227941"/>
    <lineage>
        <taxon>Bacteria</taxon>
        <taxon>Pseudomonadati</taxon>
        <taxon>Chlamydiota</taxon>
        <taxon>Chlamydiia</taxon>
        <taxon>Chlamydiales</taxon>
        <taxon>Chlamydiaceae</taxon>
        <taxon>Chlamydia/Chlamydophila group</taxon>
        <taxon>Chlamydia</taxon>
    </lineage>
</organism>